<organism>
    <name type="scientific">Homo sapiens</name>
    <name type="common">Human</name>
    <dbReference type="NCBI Taxonomy" id="9606"/>
    <lineage>
        <taxon>Eukaryota</taxon>
        <taxon>Metazoa</taxon>
        <taxon>Chordata</taxon>
        <taxon>Craniata</taxon>
        <taxon>Vertebrata</taxon>
        <taxon>Euteleostomi</taxon>
        <taxon>Mammalia</taxon>
        <taxon>Eutheria</taxon>
        <taxon>Euarchontoglires</taxon>
        <taxon>Primates</taxon>
        <taxon>Haplorrhini</taxon>
        <taxon>Catarrhini</taxon>
        <taxon>Hominidae</taxon>
        <taxon>Homo</taxon>
    </lineage>
</organism>
<keyword id="KW-0472">Membrane</keyword>
<keyword id="KW-1267">Proteomics identification</keyword>
<keyword id="KW-1185">Reference proteome</keyword>
<keyword id="KW-0769">Symport</keyword>
<keyword id="KW-0812">Transmembrane</keyword>
<keyword id="KW-1133">Transmembrane helix</keyword>
<keyword id="KW-0813">Transport</keyword>
<gene>
    <name evidence="6" type="primary">SLC45A3</name>
    <name type="synonym">PCANAP6</name>
    <name type="synonym">PRST</name>
</gene>
<feature type="chain" id="PRO_0000122519" description="Solute carrier family 45 member 3">
    <location>
        <begin position="1"/>
        <end position="553"/>
    </location>
</feature>
<feature type="transmembrane region" description="Helical; Name=1" evidence="2">
    <location>
        <begin position="19"/>
        <end position="39"/>
    </location>
</feature>
<feature type="transmembrane region" description="Helical; Name=2" evidence="2">
    <location>
        <begin position="52"/>
        <end position="72"/>
    </location>
</feature>
<feature type="transmembrane region" description="Helical; Name=3" evidence="2">
    <location>
        <begin position="88"/>
        <end position="108"/>
    </location>
</feature>
<feature type="transmembrane region" description="Helical; Name=4" evidence="2">
    <location>
        <begin position="120"/>
        <end position="140"/>
    </location>
</feature>
<feature type="transmembrane region" description="Helical; Name=5" evidence="2">
    <location>
        <begin position="161"/>
        <end position="181"/>
    </location>
</feature>
<feature type="transmembrane region" description="Helical; Name=6" evidence="2">
    <location>
        <begin position="198"/>
        <end position="218"/>
    </location>
</feature>
<feature type="transmembrane region" description="Helical; Name=7" evidence="2">
    <location>
        <begin position="275"/>
        <end position="295"/>
    </location>
</feature>
<feature type="transmembrane region" description="Helical; Name=8" evidence="2">
    <location>
        <begin position="323"/>
        <end position="343"/>
    </location>
</feature>
<feature type="transmembrane region" description="Helical; Name=9" evidence="2">
    <location>
        <begin position="353"/>
        <end position="373"/>
    </location>
</feature>
<feature type="transmembrane region" description="Helical; Name=10" evidence="2">
    <location>
        <begin position="382"/>
        <end position="402"/>
    </location>
</feature>
<feature type="transmembrane region" description="Helical; Name=11" evidence="2">
    <location>
        <begin position="522"/>
        <end position="542"/>
    </location>
</feature>
<accession>Q96JT2</accession>
<accession>A8K2U9</accession>
<dbReference type="EMBL" id="AY033593">
    <property type="protein sequence ID" value="AAK54386.1"/>
    <property type="molecule type" value="mRNA"/>
</dbReference>
<dbReference type="EMBL" id="AK290364">
    <property type="protein sequence ID" value="BAF83053.1"/>
    <property type="molecule type" value="mRNA"/>
</dbReference>
<dbReference type="EMBL" id="AK313479">
    <property type="protein sequence ID" value="BAG36263.1"/>
    <property type="molecule type" value="mRNA"/>
</dbReference>
<dbReference type="EMBL" id="CH471067">
    <property type="protein sequence ID" value="EAW91575.1"/>
    <property type="molecule type" value="Genomic_DNA"/>
</dbReference>
<dbReference type="EMBL" id="BC050416">
    <property type="protein sequence ID" value="AAH50416.1"/>
    <property type="molecule type" value="mRNA"/>
</dbReference>
<dbReference type="CCDS" id="CCDS1458.1"/>
<dbReference type="RefSeq" id="NP_149093.1">
    <property type="nucleotide sequence ID" value="NM_033102.3"/>
</dbReference>
<dbReference type="RefSeq" id="XP_005245613.1">
    <property type="nucleotide sequence ID" value="XM_005245556.3"/>
</dbReference>
<dbReference type="RefSeq" id="XP_005245614.1">
    <property type="nucleotide sequence ID" value="XM_005245557.4"/>
</dbReference>
<dbReference type="RefSeq" id="XP_016858127.1">
    <property type="nucleotide sequence ID" value="XM_017002638.1"/>
</dbReference>
<dbReference type="SMR" id="Q96JT2"/>
<dbReference type="BioGRID" id="124520">
    <property type="interactions" value="8"/>
</dbReference>
<dbReference type="FunCoup" id="Q96JT2">
    <property type="interactions" value="319"/>
</dbReference>
<dbReference type="IntAct" id="Q96JT2">
    <property type="interactions" value="1"/>
</dbReference>
<dbReference type="STRING" id="9606.ENSP00000356113"/>
<dbReference type="TCDB" id="2.A.2.4.8">
    <property type="family name" value="the glycoside-pentoside-hexuronide (gph):cation symporter family"/>
</dbReference>
<dbReference type="GlyGen" id="Q96JT2">
    <property type="glycosylation" value="1 site"/>
</dbReference>
<dbReference type="iPTMnet" id="Q96JT2"/>
<dbReference type="PhosphoSitePlus" id="Q96JT2"/>
<dbReference type="SwissPalm" id="Q96JT2"/>
<dbReference type="BioMuta" id="SLC45A3"/>
<dbReference type="DMDM" id="46396996"/>
<dbReference type="jPOST" id="Q96JT2"/>
<dbReference type="MassIVE" id="Q96JT2"/>
<dbReference type="PaxDb" id="9606-ENSP00000356113"/>
<dbReference type="PeptideAtlas" id="Q96JT2"/>
<dbReference type="ProteomicsDB" id="77008"/>
<dbReference type="Antibodypedia" id="20683">
    <property type="antibodies" value="266 antibodies from 31 providers"/>
</dbReference>
<dbReference type="DNASU" id="85414"/>
<dbReference type="Ensembl" id="ENST00000367145.4">
    <property type="protein sequence ID" value="ENSP00000356113.3"/>
    <property type="gene ID" value="ENSG00000158715.6"/>
</dbReference>
<dbReference type="GeneID" id="85414"/>
<dbReference type="KEGG" id="hsa:85414"/>
<dbReference type="MANE-Select" id="ENST00000367145.4">
    <property type="protein sequence ID" value="ENSP00000356113.3"/>
    <property type="RefSeq nucleotide sequence ID" value="NM_033102.3"/>
    <property type="RefSeq protein sequence ID" value="NP_149093.1"/>
</dbReference>
<dbReference type="UCSC" id="uc001hda.2">
    <property type="organism name" value="human"/>
</dbReference>
<dbReference type="AGR" id="HGNC:8642"/>
<dbReference type="CTD" id="85414"/>
<dbReference type="DisGeNET" id="85414"/>
<dbReference type="GeneCards" id="SLC45A3"/>
<dbReference type="HGNC" id="HGNC:8642">
    <property type="gene designation" value="SLC45A3"/>
</dbReference>
<dbReference type="HPA" id="ENSG00000158715">
    <property type="expression patterns" value="Tissue enriched (prostate)"/>
</dbReference>
<dbReference type="MIM" id="605097">
    <property type="type" value="gene"/>
</dbReference>
<dbReference type="neXtProt" id="NX_Q96JT2"/>
<dbReference type="OpenTargets" id="ENSG00000158715"/>
<dbReference type="PharmGKB" id="PA32981"/>
<dbReference type="VEuPathDB" id="HostDB:ENSG00000158715"/>
<dbReference type="eggNOG" id="KOG0637">
    <property type="taxonomic scope" value="Eukaryota"/>
</dbReference>
<dbReference type="GeneTree" id="ENSGT00950000182914"/>
<dbReference type="HOGENOM" id="CLU_015081_2_2_1"/>
<dbReference type="InParanoid" id="Q96JT2"/>
<dbReference type="OMA" id="FQWYALF"/>
<dbReference type="OrthoDB" id="28755at2759"/>
<dbReference type="PAN-GO" id="Q96JT2">
    <property type="GO annotations" value="2 GO annotations based on evolutionary models"/>
</dbReference>
<dbReference type="PhylomeDB" id="Q96JT2"/>
<dbReference type="TreeFam" id="TF325412"/>
<dbReference type="PathwayCommons" id="Q96JT2"/>
<dbReference type="Reactome" id="R-HSA-189200">
    <property type="pathway name" value="Cellular hexose transport"/>
</dbReference>
<dbReference type="BioGRID-ORCS" id="85414">
    <property type="hits" value="15 hits in 1159 CRISPR screens"/>
</dbReference>
<dbReference type="ChiTaRS" id="SLC45A3">
    <property type="organism name" value="human"/>
</dbReference>
<dbReference type="GeneWiki" id="SLC45A3"/>
<dbReference type="GenomeRNAi" id="85414"/>
<dbReference type="Pharos" id="Q96JT2">
    <property type="development level" value="Tbio"/>
</dbReference>
<dbReference type="PRO" id="PR:Q96JT2"/>
<dbReference type="Proteomes" id="UP000005640">
    <property type="component" value="Chromosome 1"/>
</dbReference>
<dbReference type="RNAct" id="Q96JT2">
    <property type="molecule type" value="protein"/>
</dbReference>
<dbReference type="Bgee" id="ENSG00000158715">
    <property type="expression patterns" value="Expressed in prostate gland and 142 other cell types or tissues"/>
</dbReference>
<dbReference type="GO" id="GO:0016020">
    <property type="term" value="C:membrane"/>
    <property type="evidence" value="ECO:0000318"/>
    <property type="project" value="GO_Central"/>
</dbReference>
<dbReference type="GO" id="GO:0005886">
    <property type="term" value="C:plasma membrane"/>
    <property type="evidence" value="ECO:0000304"/>
    <property type="project" value="Reactome"/>
</dbReference>
<dbReference type="GO" id="GO:0008506">
    <property type="term" value="F:sucrose:proton symporter activity"/>
    <property type="evidence" value="ECO:0000250"/>
    <property type="project" value="ParkinsonsUK-UCL"/>
</dbReference>
<dbReference type="GO" id="GO:0051119">
    <property type="term" value="F:sugar transmembrane transporter activity"/>
    <property type="evidence" value="ECO:0000304"/>
    <property type="project" value="Reactome"/>
</dbReference>
<dbReference type="GO" id="GO:0008645">
    <property type="term" value="P:hexose transmembrane transport"/>
    <property type="evidence" value="ECO:0000304"/>
    <property type="project" value="Reactome"/>
</dbReference>
<dbReference type="GO" id="GO:0045723">
    <property type="term" value="P:positive regulation of fatty acid biosynthetic process"/>
    <property type="evidence" value="ECO:0000250"/>
    <property type="project" value="ParkinsonsUK-UCL"/>
</dbReference>
<dbReference type="GO" id="GO:0010907">
    <property type="term" value="P:positive regulation of glucose metabolic process"/>
    <property type="evidence" value="ECO:0000250"/>
    <property type="project" value="ParkinsonsUK-UCL"/>
</dbReference>
<dbReference type="GO" id="GO:0048713">
    <property type="term" value="P:regulation of oligodendrocyte differentiation"/>
    <property type="evidence" value="ECO:0000250"/>
    <property type="project" value="ParkinsonsUK-UCL"/>
</dbReference>
<dbReference type="GO" id="GO:0015770">
    <property type="term" value="P:sucrose transport"/>
    <property type="evidence" value="ECO:0000250"/>
    <property type="project" value="ParkinsonsUK-UCL"/>
</dbReference>
<dbReference type="CDD" id="cd17313">
    <property type="entry name" value="MFS_SLC45_SUC"/>
    <property type="match status" value="1"/>
</dbReference>
<dbReference type="FunFam" id="1.20.1250.20:FF:001230">
    <property type="entry name" value="Solute carrier family 45 member 3"/>
    <property type="match status" value="1"/>
</dbReference>
<dbReference type="Gene3D" id="1.20.1250.20">
    <property type="entry name" value="MFS general substrate transporter like domains"/>
    <property type="match status" value="2"/>
</dbReference>
<dbReference type="InterPro" id="IPR011701">
    <property type="entry name" value="MFS"/>
</dbReference>
<dbReference type="InterPro" id="IPR036259">
    <property type="entry name" value="MFS_trans_sf"/>
</dbReference>
<dbReference type="PANTHER" id="PTHR19432:SF37">
    <property type="entry name" value="SOLUTE CARRIER FAMILY 45 MEMBER 3"/>
    <property type="match status" value="1"/>
</dbReference>
<dbReference type="PANTHER" id="PTHR19432">
    <property type="entry name" value="SUGAR TRANSPORTER"/>
    <property type="match status" value="1"/>
</dbReference>
<dbReference type="Pfam" id="PF07690">
    <property type="entry name" value="MFS_1"/>
    <property type="match status" value="1"/>
</dbReference>
<dbReference type="SUPFAM" id="SSF103473">
    <property type="entry name" value="MFS general substrate transporter"/>
    <property type="match status" value="1"/>
</dbReference>
<proteinExistence type="evidence at protein level"/>
<name>S45A3_HUMAN</name>
<evidence type="ECO:0000250" key="1">
    <source>
        <dbReference type="UniProtKB" id="Q8K0H7"/>
    </source>
</evidence>
<evidence type="ECO:0000255" key="2"/>
<evidence type="ECO:0000269" key="3">
    <source>
    </source>
</evidence>
<evidence type="ECO:0000269" key="4">
    <source>
    </source>
</evidence>
<evidence type="ECO:0000305" key="5"/>
<evidence type="ECO:0000312" key="6">
    <source>
        <dbReference type="HGNC" id="HGNC:8642"/>
    </source>
</evidence>
<protein>
    <recommendedName>
        <fullName>Solute carrier family 45 member 3</fullName>
    </recommendedName>
    <alternativeName>
        <fullName>Prostate cancer-associated protein 6</fullName>
    </alternativeName>
    <alternativeName>
        <fullName>Prostein</fullName>
    </alternativeName>
</protein>
<sequence length="553" mass="59323">MVQRLWVSRLLRHRKAQLLLVNLLTFGLEVCLAAGITYVPPLLLEVGVEEKFMTMVLGIGPVLGLVCVPLLGSASDHWRGRYGRRRPFIWALSLGILLSLFLIPRAGWLAGLLCPDPRPLELALLILGVGLLDFCGQVCFTPLEALLSDLFRDPDHCRQAYSVYAFMISLGGCLGYLLPAIDWDTSALAPYLGTQEECLFGLLTLIFLTCVAATLLVAEEAALGPTEPAEGLSAPSLSPHCCPCRARLAFRNLGALLPRLHQLCCRMPRTLRRLFVAELCSWMALMTFTLFYTDFVGEGLYQGVPRAEPGTEARRHYDEGVRMGSLGLFLQCAISLVFSLVMDRLVQRFGTRAVYLASVAAFPVAAGATCLSHSVAVVTASAALTGFTFSALQILPYTLASLYHREKQVFLPKYRGDTGGASSEDSLMTSFLPGPKPGAPFPNGHVGAGGSGLLPPPPALCGASACDVSVRVVVGEPTEARVVPGRGICLDLAILDSAFLLSQVAPSLFMGSIVQLSQSVTAYMVSAAGLGLVAIYFATQVVFDKSDLAKYSA</sequence>
<reference key="1">
    <citation type="journal article" date="2001" name="Cancer Res.">
        <title>Identification and characterization of prostein, a novel prostate-specific protein.</title>
        <authorList>
            <person name="Xu J."/>
            <person name="Kalos M."/>
            <person name="Stolk J.A."/>
            <person name="Zasloff E.J."/>
            <person name="Zhang X."/>
            <person name="Houghton R.L."/>
            <person name="Filho A.M."/>
            <person name="Nolasco M."/>
            <person name="Badaro R."/>
            <person name="Reed S.G."/>
        </authorList>
    </citation>
    <scope>NUCLEOTIDE SEQUENCE [MRNA]</scope>
    <scope>TISSUE SPECIFICITY</scope>
    <scope>INDUCTION</scope>
    <source>
        <tissue>Prostate</tissue>
    </source>
</reference>
<reference key="2">
    <citation type="submission" date="2005-07" db="EMBL/GenBank/DDBJ databases">
        <authorList>
            <person name="Mural R.J."/>
            <person name="Istrail S."/>
            <person name="Sutton G."/>
            <person name="Florea L."/>
            <person name="Halpern A.L."/>
            <person name="Mobarry C.M."/>
            <person name="Lippert R."/>
            <person name="Walenz B."/>
            <person name="Shatkay H."/>
            <person name="Dew I."/>
            <person name="Miller J.R."/>
            <person name="Flanigan M.J."/>
            <person name="Edwards N.J."/>
            <person name="Bolanos R."/>
            <person name="Fasulo D."/>
            <person name="Halldorsson B.V."/>
            <person name="Hannenhalli S."/>
            <person name="Turner R."/>
            <person name="Yooseph S."/>
            <person name="Lu F."/>
            <person name="Nusskern D.R."/>
            <person name="Shue B.C."/>
            <person name="Zheng X.H."/>
            <person name="Zhong F."/>
            <person name="Delcher A.L."/>
            <person name="Huson D.H."/>
            <person name="Kravitz S.A."/>
            <person name="Mouchard L."/>
            <person name="Reinert K."/>
            <person name="Remington K.A."/>
            <person name="Clark A.G."/>
            <person name="Waterman M.S."/>
            <person name="Eichler E.E."/>
            <person name="Adams M.D."/>
            <person name="Hunkapiller M.W."/>
            <person name="Myers E.W."/>
            <person name="Venter J.C."/>
        </authorList>
    </citation>
    <scope>NUCLEOTIDE SEQUENCE [LARGE SCALE GENOMIC DNA]</scope>
</reference>
<reference key="3">
    <citation type="journal article" date="2004" name="Nat. Genet.">
        <title>Complete sequencing and characterization of 21,243 full-length human cDNAs.</title>
        <authorList>
            <person name="Ota T."/>
            <person name="Suzuki Y."/>
            <person name="Nishikawa T."/>
            <person name="Otsuki T."/>
            <person name="Sugiyama T."/>
            <person name="Irie R."/>
            <person name="Wakamatsu A."/>
            <person name="Hayashi K."/>
            <person name="Sato H."/>
            <person name="Nagai K."/>
            <person name="Kimura K."/>
            <person name="Makita H."/>
            <person name="Sekine M."/>
            <person name="Obayashi M."/>
            <person name="Nishi T."/>
            <person name="Shibahara T."/>
            <person name="Tanaka T."/>
            <person name="Ishii S."/>
            <person name="Yamamoto J."/>
            <person name="Saito K."/>
            <person name="Kawai Y."/>
            <person name="Isono Y."/>
            <person name="Nakamura Y."/>
            <person name="Nagahari K."/>
            <person name="Murakami K."/>
            <person name="Yasuda T."/>
            <person name="Iwayanagi T."/>
            <person name="Wagatsuma M."/>
            <person name="Shiratori A."/>
            <person name="Sudo H."/>
            <person name="Hosoiri T."/>
            <person name="Kaku Y."/>
            <person name="Kodaira H."/>
            <person name="Kondo H."/>
            <person name="Sugawara M."/>
            <person name="Takahashi M."/>
            <person name="Kanda K."/>
            <person name="Yokoi T."/>
            <person name="Furuya T."/>
            <person name="Kikkawa E."/>
            <person name="Omura Y."/>
            <person name="Abe K."/>
            <person name="Kamihara K."/>
            <person name="Katsuta N."/>
            <person name="Sato K."/>
            <person name="Tanikawa M."/>
            <person name="Yamazaki M."/>
            <person name="Ninomiya K."/>
            <person name="Ishibashi T."/>
            <person name="Yamashita H."/>
            <person name="Murakawa K."/>
            <person name="Fujimori K."/>
            <person name="Tanai H."/>
            <person name="Kimata M."/>
            <person name="Watanabe M."/>
            <person name="Hiraoka S."/>
            <person name="Chiba Y."/>
            <person name="Ishida S."/>
            <person name="Ono Y."/>
            <person name="Takiguchi S."/>
            <person name="Watanabe S."/>
            <person name="Yosida M."/>
            <person name="Hotuta T."/>
            <person name="Kusano J."/>
            <person name="Kanehori K."/>
            <person name="Takahashi-Fujii A."/>
            <person name="Hara H."/>
            <person name="Tanase T.-O."/>
            <person name="Nomura Y."/>
            <person name="Togiya S."/>
            <person name="Komai F."/>
            <person name="Hara R."/>
            <person name="Takeuchi K."/>
            <person name="Arita M."/>
            <person name="Imose N."/>
            <person name="Musashino K."/>
            <person name="Yuuki H."/>
            <person name="Oshima A."/>
            <person name="Sasaki N."/>
            <person name="Aotsuka S."/>
            <person name="Yoshikawa Y."/>
            <person name="Matsunawa H."/>
            <person name="Ichihara T."/>
            <person name="Shiohata N."/>
            <person name="Sano S."/>
            <person name="Moriya S."/>
            <person name="Momiyama H."/>
            <person name="Satoh N."/>
            <person name="Takami S."/>
            <person name="Terashima Y."/>
            <person name="Suzuki O."/>
            <person name="Nakagawa S."/>
            <person name="Senoh A."/>
            <person name="Mizoguchi H."/>
            <person name="Goto Y."/>
            <person name="Shimizu F."/>
            <person name="Wakebe H."/>
            <person name="Hishigaki H."/>
            <person name="Watanabe T."/>
            <person name="Sugiyama A."/>
            <person name="Takemoto M."/>
            <person name="Kawakami B."/>
            <person name="Yamazaki M."/>
            <person name="Watanabe K."/>
            <person name="Kumagai A."/>
            <person name="Itakura S."/>
            <person name="Fukuzumi Y."/>
            <person name="Fujimori Y."/>
            <person name="Komiyama M."/>
            <person name="Tashiro H."/>
            <person name="Tanigami A."/>
            <person name="Fujiwara T."/>
            <person name="Ono T."/>
            <person name="Yamada K."/>
            <person name="Fujii Y."/>
            <person name="Ozaki K."/>
            <person name="Hirao M."/>
            <person name="Ohmori Y."/>
            <person name="Kawabata A."/>
            <person name="Hikiji T."/>
            <person name="Kobatake N."/>
            <person name="Inagaki H."/>
            <person name="Ikema Y."/>
            <person name="Okamoto S."/>
            <person name="Okitani R."/>
            <person name="Kawakami T."/>
            <person name="Noguchi S."/>
            <person name="Itoh T."/>
            <person name="Shigeta K."/>
            <person name="Senba T."/>
            <person name="Matsumura K."/>
            <person name="Nakajima Y."/>
            <person name="Mizuno T."/>
            <person name="Morinaga M."/>
            <person name="Sasaki M."/>
            <person name="Togashi T."/>
            <person name="Oyama M."/>
            <person name="Hata H."/>
            <person name="Watanabe M."/>
            <person name="Komatsu T."/>
            <person name="Mizushima-Sugano J."/>
            <person name="Satoh T."/>
            <person name="Shirai Y."/>
            <person name="Takahashi Y."/>
            <person name="Nakagawa K."/>
            <person name="Okumura K."/>
            <person name="Nagase T."/>
            <person name="Nomura N."/>
            <person name="Kikuchi H."/>
            <person name="Masuho Y."/>
            <person name="Yamashita R."/>
            <person name="Nakai K."/>
            <person name="Yada T."/>
            <person name="Nakamura Y."/>
            <person name="Ohara O."/>
            <person name="Isogai T."/>
            <person name="Sugano S."/>
        </authorList>
    </citation>
    <scope>NUCLEOTIDE SEQUENCE [LARGE SCALE MRNA]</scope>
    <source>
        <tissue>Thalamus</tissue>
        <tissue>Tongue</tissue>
    </source>
</reference>
<reference key="4">
    <citation type="journal article" date="2004" name="Genome Res.">
        <title>The status, quality, and expansion of the NIH full-length cDNA project: the Mammalian Gene Collection (MGC).</title>
        <authorList>
            <consortium name="The MGC Project Team"/>
        </authorList>
    </citation>
    <scope>NUCLEOTIDE SEQUENCE [LARGE SCALE MRNA]</scope>
    <source>
        <tissue>PNS</tissue>
    </source>
</reference>
<reference key="5">
    <citation type="journal article" date="2004" name="Br. J. Cancer">
        <title>Identification of an HLA-A(*)0201-restricted T-cell epitope derived from the prostate cancer-associated protein prostein.</title>
        <authorList>
            <person name="Kiessling A."/>
            <person name="Stevanovic S."/>
            <person name="Fuessel S."/>
            <person name="Weigle B."/>
            <person name="Rieger M.A."/>
            <person name="Temme A."/>
            <person name="Rieber E.P."/>
            <person name="Schmitz M."/>
        </authorList>
    </citation>
    <scope>TISSUE SPECIFICITY</scope>
</reference>
<comment type="function">
    <text evidence="1">Proton-associated sucrose transporter. May be able to transport also glucose and fructose.</text>
</comment>
<comment type="catalytic activity">
    <reaction evidence="1">
        <text>sucrose(out) + H(+)(out) = sucrose(in) + H(+)(in)</text>
        <dbReference type="Rhea" id="RHEA:72187"/>
        <dbReference type="ChEBI" id="CHEBI:15378"/>
        <dbReference type="ChEBI" id="CHEBI:17992"/>
    </reaction>
</comment>
<comment type="subcellular location">
    <subcellularLocation>
        <location evidence="5">Membrane</location>
        <topology evidence="5">Multi-pass membrane protein</topology>
    </subcellularLocation>
</comment>
<comment type="tissue specificity">
    <text evidence="3 4">Prostate specific. Expressed in all prostatic glandular cells. Expressed both in normal and cancerous prostates.</text>
</comment>
<comment type="induction">
    <text evidence="3">Up-regulated by androgens.</text>
</comment>
<comment type="miscellaneous">
    <text>Marker for prostate cells. May be used, in case of prostate cancers, as a target antigen for prostate carcinomas-directed cytotoxic T-cell lymphocytes.</text>
</comment>
<comment type="similarity">
    <text evidence="5">Belongs to the glycoside-pentoside-hexuronide (GPH) cation symporter transporter (TC 2.A.2) family.</text>
</comment>